<sequence>MIDGLIKKEFLAHKEALEKSLESLQEALKQSVHLLIETLENQGKILICGNGGSASDAQHFAAELTGRYKLERKGLSALSLSTDTSALTAIANDYGYEEVFARQVEALGVKNDVLIGISTSGNSKNVLKAYEKAKDLGVKTLSLAGRDGGKMKPLSDMALIVPSDDTPRIQEMHILMIHILCDCIERHFANKN</sequence>
<proteinExistence type="inferred from homology"/>
<evidence type="ECO:0000255" key="1">
    <source>
        <dbReference type="HAMAP-Rule" id="MF_00067"/>
    </source>
</evidence>
<feature type="chain" id="PRO_1000092277" description="Phosphoheptose isomerase">
    <location>
        <begin position="1"/>
        <end position="192"/>
    </location>
</feature>
<feature type="domain" description="SIS" evidence="1">
    <location>
        <begin position="35"/>
        <end position="192"/>
    </location>
</feature>
<feature type="binding site" evidence="1">
    <location>
        <begin position="50"/>
        <end position="52"/>
    </location>
    <ligand>
        <name>substrate</name>
    </ligand>
</feature>
<feature type="binding site" evidence="1">
    <location>
        <position position="59"/>
    </location>
    <ligand>
        <name>Zn(2+)</name>
        <dbReference type="ChEBI" id="CHEBI:29105"/>
    </ligand>
</feature>
<feature type="binding site" evidence="1">
    <location>
        <position position="63"/>
    </location>
    <ligand>
        <name>substrate</name>
    </ligand>
</feature>
<feature type="binding site" evidence="1">
    <location>
        <position position="63"/>
    </location>
    <ligand>
        <name>Zn(2+)</name>
        <dbReference type="ChEBI" id="CHEBI:29105"/>
    </ligand>
</feature>
<feature type="binding site" evidence="1">
    <location>
        <begin position="92"/>
        <end position="93"/>
    </location>
    <ligand>
        <name>substrate</name>
    </ligand>
</feature>
<feature type="binding site" evidence="1">
    <location>
        <begin position="118"/>
        <end position="120"/>
    </location>
    <ligand>
        <name>substrate</name>
    </ligand>
</feature>
<feature type="binding site" evidence="1">
    <location>
        <position position="123"/>
    </location>
    <ligand>
        <name>substrate</name>
    </ligand>
</feature>
<feature type="binding site" evidence="1">
    <location>
        <position position="170"/>
    </location>
    <ligand>
        <name>substrate</name>
    </ligand>
</feature>
<feature type="binding site" evidence="1">
    <location>
        <position position="170"/>
    </location>
    <ligand>
        <name>Zn(2+)</name>
        <dbReference type="ChEBI" id="CHEBI:29105"/>
    </ligand>
</feature>
<feature type="binding site" evidence="1">
    <location>
        <position position="178"/>
    </location>
    <ligand>
        <name>Zn(2+)</name>
        <dbReference type="ChEBI" id="CHEBI:29105"/>
    </ligand>
</feature>
<gene>
    <name evidence="1" type="primary">gmhA</name>
    <name type="ordered locus">HPSH_02525</name>
</gene>
<keyword id="KW-0119">Carbohydrate metabolism</keyword>
<keyword id="KW-0963">Cytoplasm</keyword>
<keyword id="KW-0413">Isomerase</keyword>
<keyword id="KW-0479">Metal-binding</keyword>
<keyword id="KW-0862">Zinc</keyword>
<name>GMHA_HELPS</name>
<comment type="function">
    <text evidence="1">Catalyzes the isomerization of sedoheptulose 7-phosphate in D-glycero-D-manno-heptose 7-phosphate.</text>
</comment>
<comment type="catalytic activity">
    <reaction evidence="1">
        <text>2 D-sedoheptulose 7-phosphate = D-glycero-alpha-D-manno-heptose 7-phosphate + D-glycero-beta-D-manno-heptose 7-phosphate</text>
        <dbReference type="Rhea" id="RHEA:27489"/>
        <dbReference type="ChEBI" id="CHEBI:57483"/>
        <dbReference type="ChEBI" id="CHEBI:60203"/>
        <dbReference type="ChEBI" id="CHEBI:60204"/>
        <dbReference type="EC" id="5.3.1.28"/>
    </reaction>
</comment>
<comment type="cofactor">
    <cofactor evidence="1">
        <name>Zn(2+)</name>
        <dbReference type="ChEBI" id="CHEBI:29105"/>
    </cofactor>
    <text evidence="1">Binds 1 zinc ion per subunit.</text>
</comment>
<comment type="pathway">
    <text evidence="1">Carbohydrate biosynthesis; D-glycero-D-manno-heptose 7-phosphate biosynthesis; D-glycero-alpha-D-manno-heptose 7-phosphate and D-glycero-beta-D-manno-heptose 7-phosphate from sedoheptulose 7-phosphate: step 1/1.</text>
</comment>
<comment type="subunit">
    <text evidence="1">Homotetramer.</text>
</comment>
<comment type="subcellular location">
    <subcellularLocation>
        <location evidence="1">Cytoplasm</location>
    </subcellularLocation>
</comment>
<comment type="miscellaneous">
    <text evidence="1">The reaction produces a racemic mixture of D-glycero-alpha-D-manno-heptose 7-phosphate and D-glycero-beta-D-manno-heptose 7-phosphate.</text>
</comment>
<comment type="similarity">
    <text evidence="1">Belongs to the SIS family. GmhA subfamily.</text>
</comment>
<dbReference type="EC" id="5.3.1.28" evidence="1"/>
<dbReference type="EMBL" id="CP001072">
    <property type="protein sequence ID" value="ACD47955.1"/>
    <property type="molecule type" value="Genomic_DNA"/>
</dbReference>
<dbReference type="RefSeq" id="WP_000565177.1">
    <property type="nucleotide sequence ID" value="NC_010698.2"/>
</dbReference>
<dbReference type="SMR" id="B2USX3"/>
<dbReference type="KEGG" id="hps:HPSH_02525"/>
<dbReference type="HOGENOM" id="CLU_080999_4_0_7"/>
<dbReference type="UniPathway" id="UPA00041">
    <property type="reaction ID" value="UER00436"/>
</dbReference>
<dbReference type="GO" id="GO:0005737">
    <property type="term" value="C:cytoplasm"/>
    <property type="evidence" value="ECO:0007669"/>
    <property type="project" value="UniProtKB-SubCell"/>
</dbReference>
<dbReference type="GO" id="GO:0097367">
    <property type="term" value="F:carbohydrate derivative binding"/>
    <property type="evidence" value="ECO:0007669"/>
    <property type="project" value="InterPro"/>
</dbReference>
<dbReference type="GO" id="GO:0008968">
    <property type="term" value="F:D-sedoheptulose 7-phosphate isomerase activity"/>
    <property type="evidence" value="ECO:0007669"/>
    <property type="project" value="UniProtKB-UniRule"/>
</dbReference>
<dbReference type="GO" id="GO:0008270">
    <property type="term" value="F:zinc ion binding"/>
    <property type="evidence" value="ECO:0007669"/>
    <property type="project" value="UniProtKB-UniRule"/>
</dbReference>
<dbReference type="GO" id="GO:0005975">
    <property type="term" value="P:carbohydrate metabolic process"/>
    <property type="evidence" value="ECO:0007669"/>
    <property type="project" value="UniProtKB-UniRule"/>
</dbReference>
<dbReference type="GO" id="GO:2001061">
    <property type="term" value="P:D-glycero-D-manno-heptose 7-phosphate biosynthetic process"/>
    <property type="evidence" value="ECO:0007669"/>
    <property type="project" value="UniProtKB-UniPathway"/>
</dbReference>
<dbReference type="CDD" id="cd05006">
    <property type="entry name" value="SIS_GmhA"/>
    <property type="match status" value="1"/>
</dbReference>
<dbReference type="Gene3D" id="3.40.50.10490">
    <property type="entry name" value="Glucose-6-phosphate isomerase like protein, domain 1"/>
    <property type="match status" value="1"/>
</dbReference>
<dbReference type="HAMAP" id="MF_00067">
    <property type="entry name" value="GmhA"/>
    <property type="match status" value="1"/>
</dbReference>
<dbReference type="InterPro" id="IPR035461">
    <property type="entry name" value="GmhA/DiaA"/>
</dbReference>
<dbReference type="InterPro" id="IPR004515">
    <property type="entry name" value="Phosphoheptose_Isoase"/>
</dbReference>
<dbReference type="InterPro" id="IPR001347">
    <property type="entry name" value="SIS_dom"/>
</dbReference>
<dbReference type="InterPro" id="IPR046348">
    <property type="entry name" value="SIS_dom_sf"/>
</dbReference>
<dbReference type="InterPro" id="IPR050099">
    <property type="entry name" value="SIS_GmhA/DiaA_subfam"/>
</dbReference>
<dbReference type="NCBIfam" id="TIGR00441">
    <property type="entry name" value="gmhA"/>
    <property type="match status" value="1"/>
</dbReference>
<dbReference type="PANTHER" id="PTHR30390:SF6">
    <property type="entry name" value="DNAA INITIATOR-ASSOCIATING PROTEIN DIAA"/>
    <property type="match status" value="1"/>
</dbReference>
<dbReference type="PANTHER" id="PTHR30390">
    <property type="entry name" value="SEDOHEPTULOSE 7-PHOSPHATE ISOMERASE / DNAA INITIATOR-ASSOCIATING FACTOR FOR REPLICATION INITIATION"/>
    <property type="match status" value="1"/>
</dbReference>
<dbReference type="Pfam" id="PF13580">
    <property type="entry name" value="SIS_2"/>
    <property type="match status" value="1"/>
</dbReference>
<dbReference type="SUPFAM" id="SSF53697">
    <property type="entry name" value="SIS domain"/>
    <property type="match status" value="1"/>
</dbReference>
<dbReference type="PROSITE" id="PS51464">
    <property type="entry name" value="SIS"/>
    <property type="match status" value="1"/>
</dbReference>
<protein>
    <recommendedName>
        <fullName evidence="1">Phosphoheptose isomerase</fullName>
        <ecNumber evidence="1">5.3.1.28</ecNumber>
    </recommendedName>
    <alternativeName>
        <fullName evidence="1">Sedoheptulose 7-phosphate isomerase</fullName>
    </alternativeName>
</protein>
<accession>B2USX3</accession>
<organism>
    <name type="scientific">Helicobacter pylori (strain Shi470)</name>
    <dbReference type="NCBI Taxonomy" id="512562"/>
    <lineage>
        <taxon>Bacteria</taxon>
        <taxon>Pseudomonadati</taxon>
        <taxon>Campylobacterota</taxon>
        <taxon>Epsilonproteobacteria</taxon>
        <taxon>Campylobacterales</taxon>
        <taxon>Helicobacteraceae</taxon>
        <taxon>Helicobacter</taxon>
    </lineage>
</organism>
<reference key="1">
    <citation type="submission" date="2008-05" db="EMBL/GenBank/DDBJ databases">
        <title>Genome sequence of Helicobacter pylori from the remote Amazon: traces of Asian ancestry of the first Americans.</title>
        <authorList>
            <person name="Kersulyte D."/>
            <person name="Kalia A."/>
            <person name="Gilman R.H."/>
            <person name="Berg D.E."/>
        </authorList>
    </citation>
    <scope>NUCLEOTIDE SEQUENCE [LARGE SCALE GENOMIC DNA]</scope>
    <source>
        <strain>Shi470</strain>
    </source>
</reference>